<organism>
    <name type="scientific">Oryza sativa subsp. japonica</name>
    <name type="common">Rice</name>
    <dbReference type="NCBI Taxonomy" id="39947"/>
    <lineage>
        <taxon>Eukaryota</taxon>
        <taxon>Viridiplantae</taxon>
        <taxon>Streptophyta</taxon>
        <taxon>Embryophyta</taxon>
        <taxon>Tracheophyta</taxon>
        <taxon>Spermatophyta</taxon>
        <taxon>Magnoliopsida</taxon>
        <taxon>Liliopsida</taxon>
        <taxon>Poales</taxon>
        <taxon>Poaceae</taxon>
        <taxon>BOP clade</taxon>
        <taxon>Oryzoideae</taxon>
        <taxon>Oryzeae</taxon>
        <taxon>Oryzinae</taxon>
        <taxon>Oryza</taxon>
        <taxon>Oryza sativa</taxon>
    </lineage>
</organism>
<name>RGP2_ORYSJ</name>
<dbReference type="EMBL" id="AL606608">
    <property type="protein sequence ID" value="CAE02896.1"/>
    <property type="molecule type" value="Genomic_DNA"/>
</dbReference>
<dbReference type="EMBL" id="AP008210">
    <property type="protein sequence ID" value="BAF16057.1"/>
    <property type="molecule type" value="Genomic_DNA"/>
</dbReference>
<dbReference type="EMBL" id="AP014960">
    <property type="protein sequence ID" value="BAS91447.1"/>
    <property type="molecule type" value="Genomic_DNA"/>
</dbReference>
<dbReference type="EMBL" id="AK058644">
    <property type="protein sequence ID" value="BAG86762.1"/>
    <property type="molecule type" value="mRNA"/>
</dbReference>
<dbReference type="EMBL" id="AK071012">
    <property type="protein sequence ID" value="BAG92258.1"/>
    <property type="molecule type" value="mRNA"/>
</dbReference>
<dbReference type="EMBL" id="AK104316">
    <property type="protein sequence ID" value="BAG96594.1"/>
    <property type="molecule type" value="mRNA"/>
</dbReference>
<dbReference type="RefSeq" id="XP_015635492.1">
    <property type="nucleotide sequence ID" value="XM_015780006.1"/>
</dbReference>
<dbReference type="PDB" id="8CID">
    <property type="method" value="X-ray"/>
    <property type="resolution" value="3.60 A"/>
    <property type="chains" value="A/B=1-347"/>
</dbReference>
<dbReference type="PDBsum" id="8CID"/>
<dbReference type="SMR" id="Q7FAY6"/>
<dbReference type="FunCoup" id="Q7FAY6">
    <property type="interactions" value="1909"/>
</dbReference>
<dbReference type="STRING" id="39947.Q7FAY6"/>
<dbReference type="CAZy" id="GT75">
    <property type="family name" value="Glycosyltransferase Family 75"/>
</dbReference>
<dbReference type="GlyCosmos" id="Q7FAY6">
    <property type="glycosylation" value="1 site, No reported glycans"/>
</dbReference>
<dbReference type="PaxDb" id="39947-Q7FAY6"/>
<dbReference type="EnsemblPlants" id="Os04t0660400-01">
    <property type="protein sequence ID" value="Os04t0660400-01"/>
    <property type="gene ID" value="Os04g0660400"/>
</dbReference>
<dbReference type="EnsemblPlants" id="Os04t0660400-02">
    <property type="protein sequence ID" value="Os04t0660400-02"/>
    <property type="gene ID" value="Os04g0660400"/>
</dbReference>
<dbReference type="EnsemblPlants" id="Os04t0660400-03">
    <property type="protein sequence ID" value="Os04t0660400-03"/>
    <property type="gene ID" value="Os04g0660400"/>
</dbReference>
<dbReference type="Gramene" id="Os04t0660400-01">
    <property type="protein sequence ID" value="Os04t0660400-01"/>
    <property type="gene ID" value="Os04g0660400"/>
</dbReference>
<dbReference type="Gramene" id="Os04t0660400-02">
    <property type="protein sequence ID" value="Os04t0660400-02"/>
    <property type="gene ID" value="Os04g0660400"/>
</dbReference>
<dbReference type="Gramene" id="Os04t0660400-03">
    <property type="protein sequence ID" value="Os04t0660400-03"/>
    <property type="gene ID" value="Os04g0660400"/>
</dbReference>
<dbReference type="KEGG" id="dosa:Os04g0660400"/>
<dbReference type="eggNOG" id="ENOG502QRG2">
    <property type="taxonomic scope" value="Eukaryota"/>
</dbReference>
<dbReference type="HOGENOM" id="CLU_061976_0_0_1"/>
<dbReference type="InParanoid" id="Q7FAY6"/>
<dbReference type="OMA" id="VYTKSDM"/>
<dbReference type="OrthoDB" id="1020896at2759"/>
<dbReference type="PlantReactome" id="R-OSA-1119574">
    <property type="pathway name" value="UDP-L-arabinose biosynthesis and transport"/>
</dbReference>
<dbReference type="Proteomes" id="UP000000763">
    <property type="component" value="Chromosome 4"/>
</dbReference>
<dbReference type="Proteomes" id="UP000059680">
    <property type="component" value="Chromosome 4"/>
</dbReference>
<dbReference type="GO" id="GO:0005829">
    <property type="term" value="C:cytosol"/>
    <property type="evidence" value="ECO:0000318"/>
    <property type="project" value="GO_Central"/>
</dbReference>
<dbReference type="GO" id="GO:0005794">
    <property type="term" value="C:Golgi apparatus"/>
    <property type="evidence" value="ECO:0000318"/>
    <property type="project" value="GO_Central"/>
</dbReference>
<dbReference type="GO" id="GO:0052691">
    <property type="term" value="F:UDP-arabinopyranose mutase activity"/>
    <property type="evidence" value="ECO:0000318"/>
    <property type="project" value="GO_Central"/>
</dbReference>
<dbReference type="GO" id="GO:0071555">
    <property type="term" value="P:cell wall organization"/>
    <property type="evidence" value="ECO:0007669"/>
    <property type="project" value="UniProtKB-KW"/>
</dbReference>
<dbReference type="GO" id="GO:0071669">
    <property type="term" value="P:plant-type cell wall organization or biogenesis"/>
    <property type="evidence" value="ECO:0007669"/>
    <property type="project" value="InterPro"/>
</dbReference>
<dbReference type="GO" id="GO:0033356">
    <property type="term" value="P:UDP-L-arabinose metabolic process"/>
    <property type="evidence" value="ECO:0000318"/>
    <property type="project" value="GO_Central"/>
</dbReference>
<dbReference type="InterPro" id="IPR004901">
    <property type="entry name" value="RGP"/>
</dbReference>
<dbReference type="InterPro" id="IPR037595">
    <property type="entry name" value="RGP_fam"/>
</dbReference>
<dbReference type="PANTHER" id="PTHR31682:SF4">
    <property type="entry name" value="UDP-ARABINOPYRANOSE MUTASE 5-RELATED"/>
    <property type="match status" value="1"/>
</dbReference>
<dbReference type="PANTHER" id="PTHR31682">
    <property type="entry name" value="UDP-ARABINOSE MUTASE"/>
    <property type="match status" value="1"/>
</dbReference>
<dbReference type="Pfam" id="PF03214">
    <property type="entry name" value="RGP"/>
    <property type="match status" value="1"/>
</dbReference>
<dbReference type="PIRSF" id="PIRSF016429">
    <property type="entry name" value="UPTG"/>
    <property type="match status" value="1"/>
</dbReference>
<protein>
    <recommendedName>
        <fullName evidence="5">Probable inactive UDP-arabinopyranose mutase 2</fullName>
        <shortName evidence="5">OsUAM2</shortName>
    </recommendedName>
    <alternativeName>
        <fullName evidence="5">Reversibly glycosylated polypeptide 2</fullName>
    </alternativeName>
    <alternativeName>
        <fullName evidence="6">UDP-L-arabinose mutase 2</fullName>
    </alternativeName>
</protein>
<reference key="1">
    <citation type="journal article" date="2002" name="Nature">
        <title>Sequence and analysis of rice chromosome 4.</title>
        <authorList>
            <person name="Feng Q."/>
            <person name="Zhang Y."/>
            <person name="Hao P."/>
            <person name="Wang S."/>
            <person name="Fu G."/>
            <person name="Huang Y."/>
            <person name="Li Y."/>
            <person name="Zhu J."/>
            <person name="Liu Y."/>
            <person name="Hu X."/>
            <person name="Jia P."/>
            <person name="Zhang Y."/>
            <person name="Zhao Q."/>
            <person name="Ying K."/>
            <person name="Yu S."/>
            <person name="Tang Y."/>
            <person name="Weng Q."/>
            <person name="Zhang L."/>
            <person name="Lu Y."/>
            <person name="Mu J."/>
            <person name="Lu Y."/>
            <person name="Zhang L.S."/>
            <person name="Yu Z."/>
            <person name="Fan D."/>
            <person name="Liu X."/>
            <person name="Lu T."/>
            <person name="Li C."/>
            <person name="Wu Y."/>
            <person name="Sun T."/>
            <person name="Lei H."/>
            <person name="Li T."/>
            <person name="Hu H."/>
            <person name="Guan J."/>
            <person name="Wu M."/>
            <person name="Zhang R."/>
            <person name="Zhou B."/>
            <person name="Chen Z."/>
            <person name="Chen L."/>
            <person name="Jin Z."/>
            <person name="Wang R."/>
            <person name="Yin H."/>
            <person name="Cai Z."/>
            <person name="Ren S."/>
            <person name="Lv G."/>
            <person name="Gu W."/>
            <person name="Zhu G."/>
            <person name="Tu Y."/>
            <person name="Jia J."/>
            <person name="Zhang Y."/>
            <person name="Chen J."/>
            <person name="Kang H."/>
            <person name="Chen X."/>
            <person name="Shao C."/>
            <person name="Sun Y."/>
            <person name="Hu Q."/>
            <person name="Zhang X."/>
            <person name="Zhang W."/>
            <person name="Wang L."/>
            <person name="Ding C."/>
            <person name="Sheng H."/>
            <person name="Gu J."/>
            <person name="Chen S."/>
            <person name="Ni L."/>
            <person name="Zhu F."/>
            <person name="Chen W."/>
            <person name="Lan L."/>
            <person name="Lai Y."/>
            <person name="Cheng Z."/>
            <person name="Gu M."/>
            <person name="Jiang J."/>
            <person name="Li J."/>
            <person name="Hong G."/>
            <person name="Xue Y."/>
            <person name="Han B."/>
        </authorList>
    </citation>
    <scope>NUCLEOTIDE SEQUENCE [LARGE SCALE GENOMIC DNA]</scope>
    <source>
        <strain>cv. Nipponbare</strain>
    </source>
</reference>
<reference key="2">
    <citation type="journal article" date="2005" name="Nature">
        <title>The map-based sequence of the rice genome.</title>
        <authorList>
            <consortium name="International rice genome sequencing project (IRGSP)"/>
        </authorList>
    </citation>
    <scope>NUCLEOTIDE SEQUENCE [LARGE SCALE GENOMIC DNA]</scope>
    <source>
        <strain>cv. Nipponbare</strain>
    </source>
</reference>
<reference key="3">
    <citation type="journal article" date="2008" name="Nucleic Acids Res.">
        <title>The rice annotation project database (RAP-DB): 2008 update.</title>
        <authorList>
            <consortium name="The rice annotation project (RAP)"/>
        </authorList>
    </citation>
    <scope>GENOME REANNOTATION</scope>
    <source>
        <strain>cv. Nipponbare</strain>
    </source>
</reference>
<reference key="4">
    <citation type="journal article" date="2013" name="Rice">
        <title>Improvement of the Oryza sativa Nipponbare reference genome using next generation sequence and optical map data.</title>
        <authorList>
            <person name="Kawahara Y."/>
            <person name="de la Bastide M."/>
            <person name="Hamilton J.P."/>
            <person name="Kanamori H."/>
            <person name="McCombie W.R."/>
            <person name="Ouyang S."/>
            <person name="Schwartz D.C."/>
            <person name="Tanaka T."/>
            <person name="Wu J."/>
            <person name="Zhou S."/>
            <person name="Childs K.L."/>
            <person name="Davidson R.M."/>
            <person name="Lin H."/>
            <person name="Quesada-Ocampo L."/>
            <person name="Vaillancourt B."/>
            <person name="Sakai H."/>
            <person name="Lee S.S."/>
            <person name="Kim J."/>
            <person name="Numa H."/>
            <person name="Itoh T."/>
            <person name="Buell C.R."/>
            <person name="Matsumoto T."/>
        </authorList>
    </citation>
    <scope>GENOME REANNOTATION</scope>
    <source>
        <strain>cv. Nipponbare</strain>
    </source>
</reference>
<reference key="5">
    <citation type="journal article" date="2003" name="Science">
        <title>Collection, mapping, and annotation of over 28,000 cDNA clones from japonica rice.</title>
        <authorList>
            <consortium name="The rice full-length cDNA consortium"/>
        </authorList>
    </citation>
    <scope>NUCLEOTIDE SEQUENCE [LARGE SCALE MRNA]</scope>
    <source>
        <strain>cv. Nipponbare</strain>
    </source>
</reference>
<reference key="6">
    <citation type="journal article" date="2002" name="Plant Physiol.">
        <title>Glucosylation activity and complex formation of two classes of reversibly glycosylated polypeptides.</title>
        <authorList>
            <person name="Langeveld S.M."/>
            <person name="Vennik M."/>
            <person name="Kottenhagen M."/>
            <person name="Van Wijk R."/>
            <person name="Buijk A."/>
            <person name="Kijne J.W."/>
            <person name="de Pater S."/>
        </authorList>
    </citation>
    <scope>FUNCTION</scope>
    <scope>SUBUNIT</scope>
    <scope>GLYCOSYLATION</scope>
</reference>
<reference key="7">
    <citation type="journal article" date="2007" name="Glycobiology">
        <title>A plant mutase that interconverts UDP-L-arabinofuranose and UDP-L-arabinopyranose.</title>
        <authorList>
            <person name="Konishi T."/>
            <person name="Takeda T."/>
            <person name="Miyazaki Y."/>
            <person name="Ohnishi-Kameyama M."/>
            <person name="Hayashi T."/>
            <person name="O'Neill M.A."/>
            <person name="Ishii T."/>
        </authorList>
    </citation>
    <scope>FUNCTION</scope>
    <scope>LACK OF CATALYTIC ACTIVITY</scope>
    <scope>SUBUNIT</scope>
    <scope>LACK OF GLYCOSYLATION</scope>
    <scope>IDENTIFICATION BY MASS SPECTROMETRY</scope>
</reference>
<sequence length="347" mass="38907">MSLEIQDSEVDIVIAALQPNLTTFFEAWRPFFSRFHIIVVKDPDMAEELQIPTGFDLKVYTKSDMGVLGATSIDFSGHSCRYFGYLVSRKKYVISIDDNCLPAKDNGGLTVDAVAQHMSNLKTPATPFFFNTLYDPFRKGADFVRGYPFSLREGVECMLSCGLWLHNADYDPMTHVVKRNQRNTTYVDAVMTVPLGAMMPVSGINVAFNREVLGPVMFPALRLRKEGKHRWDTLEDVWNGLCAKVVCDRLRYGVKTGLPYVMRSDAEAGKALESLKEWEGVKVMDVVLPFFESLKLSSTSVTVEDCVKELTSIVKEKLGPQNAIFAKAADAMEEWTKLWKSHGAQSA</sequence>
<evidence type="ECO:0000250" key="1">
    <source>
        <dbReference type="UniProtKB" id="Q8H8T0"/>
    </source>
</evidence>
<evidence type="ECO:0000250" key="2">
    <source>
        <dbReference type="UniProtKB" id="Q9SRT9"/>
    </source>
</evidence>
<evidence type="ECO:0000269" key="3">
    <source>
    </source>
</evidence>
<evidence type="ECO:0000269" key="4">
    <source>
    </source>
</evidence>
<evidence type="ECO:0000303" key="5">
    <source>
    </source>
</evidence>
<evidence type="ECO:0000305" key="6"/>
<evidence type="ECO:0000312" key="7">
    <source>
        <dbReference type="EMBL" id="BAS91447.1"/>
    </source>
</evidence>
<evidence type="ECO:0000312" key="8">
    <source>
        <dbReference type="EMBL" id="CAE02896.1"/>
    </source>
</evidence>
<proteinExistence type="evidence at protein level"/>
<accession>Q7FAY6</accession>
<accession>A0A0P0WFX2</accession>
<gene>
    <name evidence="5" type="primary">UAM2</name>
    <name evidence="5" type="synonym">RGP2</name>
    <name evidence="7" type="ordered locus">Os04g0660400</name>
    <name evidence="6" type="ordered locus">LOC_Os04g56520</name>
    <name evidence="8" type="ORF">OSJNBa0015K02.13</name>
</gene>
<keyword id="KW-0002">3D-structure</keyword>
<keyword id="KW-0961">Cell wall biogenesis/degradation</keyword>
<keyword id="KW-0325">Glycoprotein</keyword>
<keyword id="KW-0333">Golgi apparatus</keyword>
<keyword id="KW-1185">Reference proteome</keyword>
<feature type="chain" id="PRO_0000410990" description="Probable inactive UDP-arabinopyranose mutase 2">
    <location>
        <begin position="1"/>
        <end position="347"/>
    </location>
</feature>
<feature type="site" description="Required for activity" evidence="1">
    <location>
        <position position="145"/>
    </location>
</feature>
<feature type="site" description="Required for activity" evidence="1">
    <location>
        <position position="152"/>
    </location>
</feature>
<feature type="glycosylation site" description="N-linked (Glc...) arginine" evidence="1">
    <location>
        <position position="145"/>
    </location>
</feature>
<comment type="function">
    <text evidence="3 4">Probable inactive UDP-L-arabinose mutase. Inactive in vitro, but associates with UAM1 and UAM3.</text>
</comment>
<comment type="subunit">
    <text evidence="3 4">Heteromers with UAM1 and UAM3.</text>
</comment>
<comment type="subcellular location">
    <subcellularLocation>
        <location evidence="2">Golgi apparatus</location>
    </subcellularLocation>
</comment>
<comment type="PTM">
    <text evidence="3">Is not reversibly glycosylated in vitro by UDP-glucose, UDP-xylose and UDP-galactose.</text>
</comment>
<comment type="similarity">
    <text evidence="6">Belongs to the RGP family.</text>
</comment>